<comment type="function">
    <text evidence="1">Part of the twin-arginine translocation (Tat) system that transports large folded proteins containing a characteristic twin-arginine motif in their signal peptide across membranes. TatA could form the protein-conducting channel of the Tat system.</text>
</comment>
<comment type="subunit">
    <text evidence="1">The Tat system comprises two distinct complexes: a TatABC complex, containing multiple copies of TatA, TatB and TatC subunits, and a separate TatA complex, containing only TatA subunits. Substrates initially bind to the TatABC complex, which probably triggers association of the separate TatA complex to form the active translocon.</text>
</comment>
<comment type="subcellular location">
    <subcellularLocation>
        <location evidence="1">Cell inner membrane</location>
        <topology evidence="1">Single-pass membrane protein</topology>
    </subcellularLocation>
</comment>
<comment type="similarity">
    <text evidence="1">Belongs to the TatA/E family.</text>
</comment>
<evidence type="ECO:0000255" key="1">
    <source>
        <dbReference type="HAMAP-Rule" id="MF_00236"/>
    </source>
</evidence>
<evidence type="ECO:0000256" key="2">
    <source>
        <dbReference type="SAM" id="MobiDB-lite"/>
    </source>
</evidence>
<keyword id="KW-0997">Cell inner membrane</keyword>
<keyword id="KW-1003">Cell membrane</keyword>
<keyword id="KW-0472">Membrane</keyword>
<keyword id="KW-0653">Protein transport</keyword>
<keyword id="KW-0811">Translocation</keyword>
<keyword id="KW-0812">Transmembrane</keyword>
<keyword id="KW-1133">Transmembrane helix</keyword>
<keyword id="KW-0813">Transport</keyword>
<accession>B9JEG8</accession>
<dbReference type="EMBL" id="CP000628">
    <property type="protein sequence ID" value="ACM26389.1"/>
    <property type="molecule type" value="Genomic_DNA"/>
</dbReference>
<dbReference type="RefSeq" id="WP_007690954.1">
    <property type="nucleotide sequence ID" value="NC_011985.1"/>
</dbReference>
<dbReference type="SMR" id="B9JEG8"/>
<dbReference type="STRING" id="311403.Arad_2126"/>
<dbReference type="KEGG" id="ara:Arad_2126"/>
<dbReference type="eggNOG" id="COG1826">
    <property type="taxonomic scope" value="Bacteria"/>
</dbReference>
<dbReference type="HOGENOM" id="CLU_086034_5_0_5"/>
<dbReference type="Proteomes" id="UP000001600">
    <property type="component" value="Chromosome 1"/>
</dbReference>
<dbReference type="GO" id="GO:0033281">
    <property type="term" value="C:TAT protein transport complex"/>
    <property type="evidence" value="ECO:0007669"/>
    <property type="project" value="UniProtKB-UniRule"/>
</dbReference>
<dbReference type="GO" id="GO:0008320">
    <property type="term" value="F:protein transmembrane transporter activity"/>
    <property type="evidence" value="ECO:0007669"/>
    <property type="project" value="UniProtKB-UniRule"/>
</dbReference>
<dbReference type="GO" id="GO:0043953">
    <property type="term" value="P:protein transport by the Tat complex"/>
    <property type="evidence" value="ECO:0007669"/>
    <property type="project" value="UniProtKB-UniRule"/>
</dbReference>
<dbReference type="Gene3D" id="1.20.5.3310">
    <property type="match status" value="1"/>
</dbReference>
<dbReference type="HAMAP" id="MF_00236">
    <property type="entry name" value="TatA_E"/>
    <property type="match status" value="1"/>
</dbReference>
<dbReference type="InterPro" id="IPR003369">
    <property type="entry name" value="TatA/B/E"/>
</dbReference>
<dbReference type="InterPro" id="IPR006312">
    <property type="entry name" value="TatA/E"/>
</dbReference>
<dbReference type="NCBIfam" id="NF001940">
    <property type="entry name" value="PRK00720.1"/>
    <property type="match status" value="1"/>
</dbReference>
<dbReference type="NCBIfam" id="TIGR01411">
    <property type="entry name" value="tatAE"/>
    <property type="match status" value="1"/>
</dbReference>
<dbReference type="PANTHER" id="PTHR42982">
    <property type="entry name" value="SEC-INDEPENDENT PROTEIN TRANSLOCASE PROTEIN TATA"/>
    <property type="match status" value="1"/>
</dbReference>
<dbReference type="PANTHER" id="PTHR42982:SF1">
    <property type="entry name" value="SEC-INDEPENDENT PROTEIN TRANSLOCASE PROTEIN TATA"/>
    <property type="match status" value="1"/>
</dbReference>
<dbReference type="Pfam" id="PF02416">
    <property type="entry name" value="TatA_B_E"/>
    <property type="match status" value="1"/>
</dbReference>
<protein>
    <recommendedName>
        <fullName evidence="1">Sec-independent protein translocase protein TatA</fullName>
    </recommendedName>
</protein>
<sequence>MGSLSIWHWLIVLAIALLLFGRGKIPELMGDVAKGIKSFKKGMNDDEETPPPAQSTTSRTVEHKADESK</sequence>
<name>TATA_RHIR8</name>
<gene>
    <name evidence="1" type="primary">tatA</name>
    <name type="ordered locus">Arad_2126</name>
</gene>
<reference key="1">
    <citation type="journal article" date="2009" name="J. Bacteriol.">
        <title>Genome sequences of three Agrobacterium biovars help elucidate the evolution of multichromosome genomes in bacteria.</title>
        <authorList>
            <person name="Slater S.C."/>
            <person name="Goldman B.S."/>
            <person name="Goodner B."/>
            <person name="Setubal J.C."/>
            <person name="Farrand S.K."/>
            <person name="Nester E.W."/>
            <person name="Burr T.J."/>
            <person name="Banta L."/>
            <person name="Dickerman A.W."/>
            <person name="Paulsen I."/>
            <person name="Otten L."/>
            <person name="Suen G."/>
            <person name="Welch R."/>
            <person name="Almeida N.F."/>
            <person name="Arnold F."/>
            <person name="Burton O.T."/>
            <person name="Du Z."/>
            <person name="Ewing A."/>
            <person name="Godsy E."/>
            <person name="Heisel S."/>
            <person name="Houmiel K.L."/>
            <person name="Jhaveri J."/>
            <person name="Lu J."/>
            <person name="Miller N.M."/>
            <person name="Norton S."/>
            <person name="Chen Q."/>
            <person name="Phoolcharoen W."/>
            <person name="Ohlin V."/>
            <person name="Ondrusek D."/>
            <person name="Pride N."/>
            <person name="Stricklin S.L."/>
            <person name="Sun J."/>
            <person name="Wheeler C."/>
            <person name="Wilson L."/>
            <person name="Zhu H."/>
            <person name="Wood D.W."/>
        </authorList>
    </citation>
    <scope>NUCLEOTIDE SEQUENCE [LARGE SCALE GENOMIC DNA]</scope>
    <source>
        <strain>K84 / ATCC BAA-868</strain>
    </source>
</reference>
<organism>
    <name type="scientific">Rhizobium rhizogenes (strain K84 / ATCC BAA-868)</name>
    <name type="common">Agrobacterium radiobacter</name>
    <dbReference type="NCBI Taxonomy" id="311403"/>
    <lineage>
        <taxon>Bacteria</taxon>
        <taxon>Pseudomonadati</taxon>
        <taxon>Pseudomonadota</taxon>
        <taxon>Alphaproteobacteria</taxon>
        <taxon>Hyphomicrobiales</taxon>
        <taxon>Rhizobiaceae</taxon>
        <taxon>Rhizobium/Agrobacterium group</taxon>
        <taxon>Rhizobium</taxon>
    </lineage>
</organism>
<feature type="chain" id="PRO_1000125180" description="Sec-independent protein translocase protein TatA">
    <location>
        <begin position="1"/>
        <end position="69"/>
    </location>
</feature>
<feature type="transmembrane region" description="Helical" evidence="1">
    <location>
        <begin position="1"/>
        <end position="21"/>
    </location>
</feature>
<feature type="region of interest" description="Disordered" evidence="2">
    <location>
        <begin position="41"/>
        <end position="69"/>
    </location>
</feature>
<feature type="compositionally biased region" description="Basic and acidic residues" evidence="2">
    <location>
        <begin position="60"/>
        <end position="69"/>
    </location>
</feature>
<proteinExistence type="inferred from homology"/>